<keyword id="KW-0025">Alternative splicing</keyword>
<keyword id="KW-1003">Cell membrane</keyword>
<keyword id="KW-0963">Cytoplasm</keyword>
<keyword id="KW-0472">Membrane</keyword>
<keyword id="KW-0597">Phosphoprotein</keyword>
<keyword id="KW-1185">Reference proteome</keyword>
<gene>
    <name type="primary">Hycc1</name>
    <name type="synonym">Drctnnb1a</name>
    <name type="synonym">Fam126a</name>
</gene>
<protein>
    <recommendedName>
        <fullName>Hyccin</fullName>
    </recommendedName>
    <alternativeName>
        <fullName>Down-regulated by CTNNB1 protein A</fullName>
    </alternativeName>
</protein>
<organism>
    <name type="scientific">Mus musculus</name>
    <name type="common">Mouse</name>
    <dbReference type="NCBI Taxonomy" id="10090"/>
    <lineage>
        <taxon>Eukaryota</taxon>
        <taxon>Metazoa</taxon>
        <taxon>Chordata</taxon>
        <taxon>Craniata</taxon>
        <taxon>Vertebrata</taxon>
        <taxon>Euteleostomi</taxon>
        <taxon>Mammalia</taxon>
        <taxon>Eutheria</taxon>
        <taxon>Euarchontoglires</taxon>
        <taxon>Glires</taxon>
        <taxon>Rodentia</taxon>
        <taxon>Myomorpha</taxon>
        <taxon>Muroidea</taxon>
        <taxon>Muridae</taxon>
        <taxon>Murinae</taxon>
        <taxon>Mus</taxon>
        <taxon>Mus</taxon>
    </lineage>
</organism>
<reference key="1">
    <citation type="journal article" date="2000" name="Cancer Res.">
        <title>Isolation and characterization of a novel human gene, DRCTNNB1A, the expression of which is down-regulated by beta-catenin.</title>
        <authorList>
            <person name="Kawasoe T."/>
            <person name="Furukawa Y."/>
            <person name="Daigo Y."/>
            <person name="Nishiwaki T."/>
            <person name="Ishiguro H."/>
            <person name="Fujita M."/>
            <person name="Satoh S."/>
            <person name="Miwa N."/>
            <person name="Nagasawa Y."/>
            <person name="Miyoshi Y."/>
            <person name="Ogawa M."/>
            <person name="Nakamura Y."/>
        </authorList>
    </citation>
    <scope>NUCLEOTIDE SEQUENCE [MRNA] (ISOFORM 1)</scope>
    <scope>INDUCTION</scope>
    <source>
        <tissue>Spleen</tissue>
    </source>
</reference>
<reference key="2">
    <citation type="journal article" date="2005" name="Science">
        <title>The transcriptional landscape of the mammalian genome.</title>
        <authorList>
            <person name="Carninci P."/>
            <person name="Kasukawa T."/>
            <person name="Katayama S."/>
            <person name="Gough J."/>
            <person name="Frith M.C."/>
            <person name="Maeda N."/>
            <person name="Oyama R."/>
            <person name="Ravasi T."/>
            <person name="Lenhard B."/>
            <person name="Wells C."/>
            <person name="Kodzius R."/>
            <person name="Shimokawa K."/>
            <person name="Bajic V.B."/>
            <person name="Brenner S.E."/>
            <person name="Batalov S."/>
            <person name="Forrest A.R."/>
            <person name="Zavolan M."/>
            <person name="Davis M.J."/>
            <person name="Wilming L.G."/>
            <person name="Aidinis V."/>
            <person name="Allen J.E."/>
            <person name="Ambesi-Impiombato A."/>
            <person name="Apweiler R."/>
            <person name="Aturaliya R.N."/>
            <person name="Bailey T.L."/>
            <person name="Bansal M."/>
            <person name="Baxter L."/>
            <person name="Beisel K.W."/>
            <person name="Bersano T."/>
            <person name="Bono H."/>
            <person name="Chalk A.M."/>
            <person name="Chiu K.P."/>
            <person name="Choudhary V."/>
            <person name="Christoffels A."/>
            <person name="Clutterbuck D.R."/>
            <person name="Crowe M.L."/>
            <person name="Dalla E."/>
            <person name="Dalrymple B.P."/>
            <person name="de Bono B."/>
            <person name="Della Gatta G."/>
            <person name="di Bernardo D."/>
            <person name="Down T."/>
            <person name="Engstrom P."/>
            <person name="Fagiolini M."/>
            <person name="Faulkner G."/>
            <person name="Fletcher C.F."/>
            <person name="Fukushima T."/>
            <person name="Furuno M."/>
            <person name="Futaki S."/>
            <person name="Gariboldi M."/>
            <person name="Georgii-Hemming P."/>
            <person name="Gingeras T.R."/>
            <person name="Gojobori T."/>
            <person name="Green R.E."/>
            <person name="Gustincich S."/>
            <person name="Harbers M."/>
            <person name="Hayashi Y."/>
            <person name="Hensch T.K."/>
            <person name="Hirokawa N."/>
            <person name="Hill D."/>
            <person name="Huminiecki L."/>
            <person name="Iacono M."/>
            <person name="Ikeo K."/>
            <person name="Iwama A."/>
            <person name="Ishikawa T."/>
            <person name="Jakt M."/>
            <person name="Kanapin A."/>
            <person name="Katoh M."/>
            <person name="Kawasawa Y."/>
            <person name="Kelso J."/>
            <person name="Kitamura H."/>
            <person name="Kitano H."/>
            <person name="Kollias G."/>
            <person name="Krishnan S.P."/>
            <person name="Kruger A."/>
            <person name="Kummerfeld S.K."/>
            <person name="Kurochkin I.V."/>
            <person name="Lareau L.F."/>
            <person name="Lazarevic D."/>
            <person name="Lipovich L."/>
            <person name="Liu J."/>
            <person name="Liuni S."/>
            <person name="McWilliam S."/>
            <person name="Madan Babu M."/>
            <person name="Madera M."/>
            <person name="Marchionni L."/>
            <person name="Matsuda H."/>
            <person name="Matsuzawa S."/>
            <person name="Miki H."/>
            <person name="Mignone F."/>
            <person name="Miyake S."/>
            <person name="Morris K."/>
            <person name="Mottagui-Tabar S."/>
            <person name="Mulder N."/>
            <person name="Nakano N."/>
            <person name="Nakauchi H."/>
            <person name="Ng P."/>
            <person name="Nilsson R."/>
            <person name="Nishiguchi S."/>
            <person name="Nishikawa S."/>
            <person name="Nori F."/>
            <person name="Ohara O."/>
            <person name="Okazaki Y."/>
            <person name="Orlando V."/>
            <person name="Pang K.C."/>
            <person name="Pavan W.J."/>
            <person name="Pavesi G."/>
            <person name="Pesole G."/>
            <person name="Petrovsky N."/>
            <person name="Piazza S."/>
            <person name="Reed J."/>
            <person name="Reid J.F."/>
            <person name="Ring B.Z."/>
            <person name="Ringwald M."/>
            <person name="Rost B."/>
            <person name="Ruan Y."/>
            <person name="Salzberg S.L."/>
            <person name="Sandelin A."/>
            <person name="Schneider C."/>
            <person name="Schoenbach C."/>
            <person name="Sekiguchi K."/>
            <person name="Semple C.A."/>
            <person name="Seno S."/>
            <person name="Sessa L."/>
            <person name="Sheng Y."/>
            <person name="Shibata Y."/>
            <person name="Shimada H."/>
            <person name="Shimada K."/>
            <person name="Silva D."/>
            <person name="Sinclair B."/>
            <person name="Sperling S."/>
            <person name="Stupka E."/>
            <person name="Sugiura K."/>
            <person name="Sultana R."/>
            <person name="Takenaka Y."/>
            <person name="Taki K."/>
            <person name="Tammoja K."/>
            <person name="Tan S.L."/>
            <person name="Tang S."/>
            <person name="Taylor M.S."/>
            <person name="Tegner J."/>
            <person name="Teichmann S.A."/>
            <person name="Ueda H.R."/>
            <person name="van Nimwegen E."/>
            <person name="Verardo R."/>
            <person name="Wei C.L."/>
            <person name="Yagi K."/>
            <person name="Yamanishi H."/>
            <person name="Zabarovsky E."/>
            <person name="Zhu S."/>
            <person name="Zimmer A."/>
            <person name="Hide W."/>
            <person name="Bult C."/>
            <person name="Grimmond S.M."/>
            <person name="Teasdale R.D."/>
            <person name="Liu E.T."/>
            <person name="Brusic V."/>
            <person name="Quackenbush J."/>
            <person name="Wahlestedt C."/>
            <person name="Mattick J.S."/>
            <person name="Hume D.A."/>
            <person name="Kai C."/>
            <person name="Sasaki D."/>
            <person name="Tomaru Y."/>
            <person name="Fukuda S."/>
            <person name="Kanamori-Katayama M."/>
            <person name="Suzuki M."/>
            <person name="Aoki J."/>
            <person name="Arakawa T."/>
            <person name="Iida J."/>
            <person name="Imamura K."/>
            <person name="Itoh M."/>
            <person name="Kato T."/>
            <person name="Kawaji H."/>
            <person name="Kawagashira N."/>
            <person name="Kawashima T."/>
            <person name="Kojima M."/>
            <person name="Kondo S."/>
            <person name="Konno H."/>
            <person name="Nakano K."/>
            <person name="Ninomiya N."/>
            <person name="Nishio T."/>
            <person name="Okada M."/>
            <person name="Plessy C."/>
            <person name="Shibata K."/>
            <person name="Shiraki T."/>
            <person name="Suzuki S."/>
            <person name="Tagami M."/>
            <person name="Waki K."/>
            <person name="Watahiki A."/>
            <person name="Okamura-Oho Y."/>
            <person name="Suzuki H."/>
            <person name="Kawai J."/>
            <person name="Hayashizaki Y."/>
        </authorList>
    </citation>
    <scope>NUCLEOTIDE SEQUENCE [LARGE SCALE MRNA] (ISOFORM 2)</scope>
    <source>
        <strain>C57BL/6J</strain>
        <tissue>Testis</tissue>
    </source>
</reference>
<reference key="3">
    <citation type="journal article" date="2009" name="PLoS Biol.">
        <title>Lineage-specific biology revealed by a finished genome assembly of the mouse.</title>
        <authorList>
            <person name="Church D.M."/>
            <person name="Goodstadt L."/>
            <person name="Hillier L.W."/>
            <person name="Zody M.C."/>
            <person name="Goldstein S."/>
            <person name="She X."/>
            <person name="Bult C.J."/>
            <person name="Agarwala R."/>
            <person name="Cherry J.L."/>
            <person name="DiCuccio M."/>
            <person name="Hlavina W."/>
            <person name="Kapustin Y."/>
            <person name="Meric P."/>
            <person name="Maglott D."/>
            <person name="Birtle Z."/>
            <person name="Marques A.C."/>
            <person name="Graves T."/>
            <person name="Zhou S."/>
            <person name="Teague B."/>
            <person name="Potamousis K."/>
            <person name="Churas C."/>
            <person name="Place M."/>
            <person name="Herschleb J."/>
            <person name="Runnheim R."/>
            <person name="Forrest D."/>
            <person name="Amos-Landgraf J."/>
            <person name="Schwartz D.C."/>
            <person name="Cheng Z."/>
            <person name="Lindblad-Toh K."/>
            <person name="Eichler E.E."/>
            <person name="Ponting C.P."/>
        </authorList>
    </citation>
    <scope>NUCLEOTIDE SEQUENCE [LARGE SCALE GENOMIC DNA]</scope>
    <source>
        <strain>C57BL/6J</strain>
    </source>
</reference>
<reference key="4">
    <citation type="journal article" date="2004" name="Genome Res.">
        <title>The status, quality, and expansion of the NIH full-length cDNA project: the Mammalian Gene Collection (MGC).</title>
        <authorList>
            <consortium name="The MGC Project Team"/>
        </authorList>
    </citation>
    <scope>NUCLEOTIDE SEQUENCE [LARGE SCALE MRNA] (ISOFORM 1)</scope>
    <source>
        <strain>C57BL/6J</strain>
        <tissue>Brain</tissue>
    </source>
</reference>
<reference key="5">
    <citation type="journal article" date="2009" name="Immunity">
        <title>The phagosomal proteome in interferon-gamma-activated macrophages.</title>
        <authorList>
            <person name="Trost M."/>
            <person name="English L."/>
            <person name="Lemieux S."/>
            <person name="Courcelles M."/>
            <person name="Desjardins M."/>
            <person name="Thibault P."/>
        </authorList>
    </citation>
    <scope>PHOSPHORYLATION [LARGE SCALE ANALYSIS] AT SER-453</scope>
    <scope>IDENTIFICATION BY MASS SPECTROMETRY [LARGE SCALE ANALYSIS]</scope>
</reference>
<reference key="6">
    <citation type="journal article" date="2010" name="Cell">
        <title>A tissue-specific atlas of mouse protein phosphorylation and expression.</title>
        <authorList>
            <person name="Huttlin E.L."/>
            <person name="Jedrychowski M.P."/>
            <person name="Elias J.E."/>
            <person name="Goswami T."/>
            <person name="Rad R."/>
            <person name="Beausoleil S.A."/>
            <person name="Villen J."/>
            <person name="Haas W."/>
            <person name="Sowa M.E."/>
            <person name="Gygi S.P."/>
        </authorList>
    </citation>
    <scope>PHOSPHORYLATION [LARGE SCALE ANALYSIS] AT SER-321; SER-415; SER-453 AND SER-465</scope>
    <scope>IDENTIFICATION BY MASS SPECTROMETRY [LARGE SCALE ANALYSIS]</scope>
    <source>
        <tissue>Brain</tissue>
        <tissue>Heart</tissue>
        <tissue>Kidney</tissue>
        <tissue>Lung</tissue>
        <tissue>Spleen</tissue>
    </source>
</reference>
<reference key="7">
    <citation type="journal article" date="2012" name="PLoS ONE">
        <title>Hyccin, the Molecule Mutated in the Leukodystrophy Hypomyelination and Congenital Cataract (HCC), Is a Neuronal Protein.</title>
        <authorList>
            <person name="Gazzerro E."/>
            <person name="Baldassari S."/>
            <person name="Giacomini C."/>
            <person name="Musante V."/>
            <person name="Fruscione F."/>
            <person name="La Padula V."/>
            <person name="Biancheri R."/>
            <person name="Scarfi S."/>
            <person name="Prada V."/>
            <person name="Sotgia F."/>
            <person name="Duncan I.D."/>
            <person name="Zara F."/>
            <person name="Werner H.B."/>
            <person name="Lisanti M.P."/>
            <person name="Nobbio L."/>
            <person name="Corradi A."/>
            <person name="Minetti C."/>
        </authorList>
    </citation>
    <scope>TISSUE SPECIFICITY</scope>
</reference>
<reference key="8">
    <citation type="journal article" date="2016" name="Nat. Cell Biol.">
        <title>The leukodystrophy protein FAM126A (hyccin) regulates PtdIns(4)P synthesis at the plasma membrane.</title>
        <authorList>
            <person name="Baskin J.M."/>
            <person name="Wu X."/>
            <person name="Christiano R."/>
            <person name="Oh M.S."/>
            <person name="Schauder C.M."/>
            <person name="Gazzerro E."/>
            <person name="Messa M."/>
            <person name="Baldassari S."/>
            <person name="Assereto S."/>
            <person name="Biancheri R."/>
            <person name="Zara F."/>
            <person name="Minetti C."/>
            <person name="Raimondi A."/>
            <person name="Simons M."/>
            <person name="Walther T.C."/>
            <person name="Reinisch K.M."/>
            <person name="De Camilli P."/>
        </authorList>
    </citation>
    <scope>DISRUPTION PHENOTYPE</scope>
    <scope>TISSUE SPECIFICITY</scope>
</reference>
<sequence>MFTSEIGVVEEWLSEFKTLPETSLPNYATNLKDKSSLVTSLYKVIQEPQSELLEPVCHQLFEFYRSGEEQLLRFTLQFLPELMWCYLAVSASRDVHSSGCIEALLLGVYNLEIVDKHGHSKVLSFTIPSLSKPSVYHEPSSIGSMALTESALSQHGLSKVVYSGPHPQREMLTAQNRFEVLTFLLLCYNAALTYMPSVSLQSLCQICSRICVCGYPRQHVRKYRGVSSRIPISSGFMVQMLTGVYFAIYNGEWDLAQKALDDIIYRAQLELYPEPLLVANAIKASLPHGAMKSSKEGTRCIQVEITPTSSRISRNAVTSMSIRGHRWKRHGDTELTGQEELMDITEVDEGFYSRAASSTSQSGLSNSSHNCSNKTSVGKNQRRSGGSKAGAKERETAGESCRDHFARKQTQRAQSENLELLSLKRLTLTSSQSLPKPSSQGLAKTAATVFSKSFEQVSGAPVPRSPSPAIGCVAGADANRFSACSLQEEKLIYVSERTELAVKCQAGQQGPPSISVTLSAE</sequence>
<feature type="chain" id="PRO_0000080006" description="Hyccin">
    <location>
        <begin position="1"/>
        <end position="521"/>
    </location>
</feature>
<feature type="region of interest" description="Disordered" evidence="2">
    <location>
        <begin position="355"/>
        <end position="413"/>
    </location>
</feature>
<feature type="compositionally biased region" description="Low complexity" evidence="2">
    <location>
        <begin position="355"/>
        <end position="373"/>
    </location>
</feature>
<feature type="compositionally biased region" description="Basic and acidic residues" evidence="2">
    <location>
        <begin position="390"/>
        <end position="406"/>
    </location>
</feature>
<feature type="modified residue" description="Phosphothreonine" evidence="1">
    <location>
        <position position="306"/>
    </location>
</feature>
<feature type="modified residue" description="Phosphoserine" evidence="8">
    <location>
        <position position="321"/>
    </location>
</feature>
<feature type="modified residue" description="Phosphoserine" evidence="8">
    <location>
        <position position="415"/>
    </location>
</feature>
<feature type="modified residue" description="Phosphoserine" evidence="1">
    <location>
        <position position="422"/>
    </location>
</feature>
<feature type="modified residue" description="Phosphoserine" evidence="1">
    <location>
        <position position="433"/>
    </location>
</feature>
<feature type="modified residue" description="Phosphoserine" evidence="7 8">
    <location>
        <position position="453"/>
    </location>
</feature>
<feature type="modified residue" description="Phosphoserine" evidence="8">
    <location>
        <position position="465"/>
    </location>
</feature>
<feature type="splice variant" id="VSP_058130" description="In isoform 3.">
    <original>GDTELTGQEELMDITEVDEGFYSRAASSTSQSGLSNSSHNCSNKTSVGKNQRRSGGSKAGAKERETAGESCRDHFARKQTQRAQSENLEL</original>
    <variation>EQPESSCAAAAEAGILVIPEISVTHVSGERTGNGEKGRALGDIDAQHMQGVQETATDPRSESRGLPELRRQKSVRKMMEDGMSTAGRVQF</variation>
    <location>
        <begin position="331"/>
        <end position="420"/>
    </location>
</feature>
<feature type="splice variant" id="VSP_058131" description="In isoform 2.">
    <original>DTELTGQEELMDITEVDEGFYSRAASSTSQSGLSNSSHN</original>
    <variation>GSKGSRQSRPTIDSDTITCWNLQSRFKYDHNVQKSVSKI</variation>
    <location>
        <begin position="332"/>
        <end position="370"/>
    </location>
</feature>
<feature type="splice variant" id="VSP_058132" description="In isoform 2.">
    <location>
        <begin position="371"/>
        <end position="521"/>
    </location>
</feature>
<feature type="splice variant" id="VSP_058133" description="In isoform 3.">
    <location>
        <begin position="421"/>
        <end position="521"/>
    </location>
</feature>
<feature type="sequence conflict" description="In Ref. 1; BAB39850." ref="1">
    <original>T</original>
    <variation>S</variation>
    <location>
        <position position="39"/>
    </location>
</feature>
<evidence type="ECO:0000250" key="1">
    <source>
        <dbReference type="UniProtKB" id="Q9BYI3"/>
    </source>
</evidence>
<evidence type="ECO:0000256" key="2">
    <source>
        <dbReference type="SAM" id="MobiDB-lite"/>
    </source>
</evidence>
<evidence type="ECO:0000269" key="3">
    <source>
    </source>
</evidence>
<evidence type="ECO:0000269" key="4">
    <source>
    </source>
</evidence>
<evidence type="ECO:0000269" key="5">
    <source>
    </source>
</evidence>
<evidence type="ECO:0000305" key="6"/>
<evidence type="ECO:0007744" key="7">
    <source>
    </source>
</evidence>
<evidence type="ECO:0007744" key="8">
    <source>
    </source>
</evidence>
<accession>Q6P9N1</accession>
<accession>D3Z481</accession>
<accession>Q3TTP7</accession>
<accession>Q99NC4</accession>
<comment type="function">
    <text evidence="1">Component of a complex required to localize phosphatidylinositol 4-kinase (PI4K) to the plasma membrane. The complex acts as a regulator of phosphatidylinositol 4-phosphate (PtdIns(4)P) synthesis. HYCC1 plays a key role in oligodendrocytes formation, a cell type with expanded plasma membrane that requires generation of PtdIns(4)P. Its role in oligodendrocytes formation probably explains its importance in myelination of the central and peripheral nervous system. May also have a role in the beta-catenin/Lef signaling pathway.</text>
</comment>
<comment type="subunit">
    <text evidence="1">Component of a phosphatidylinositol 4-kinase (PI4K) complex, composed of PI4KA, EFR3 (EFR3A or EFR3B), TTC7 (TTC7A or TTC7B) and HYCC (HYCC1 or HYCC2). Interacts with TTC7 (TTC7A or TTC7B), interaction is direct.</text>
</comment>
<comment type="subcellular location">
    <subcellularLocation>
        <location evidence="1">Cytoplasm</location>
        <location evidence="1">Cytosol</location>
    </subcellularLocation>
    <subcellularLocation>
        <location evidence="1">Cell membrane</location>
    </subcellularLocation>
    <text evidence="1">Localizes to the cytosol and is recruited to the plasma membrane following interaction with other components of the phosphatidylinositol 4-kinase (PI4K) complex.</text>
</comment>
<comment type="alternative products">
    <event type="alternative splicing"/>
    <isoform>
        <id>Q6P9N1-1</id>
        <name>1</name>
        <sequence type="displayed"/>
    </isoform>
    <isoform>
        <id>Q6P9N1-2</id>
        <name>2</name>
        <sequence type="described" ref="VSP_058131 VSP_058132"/>
    </isoform>
    <isoform>
        <id>Q6P9N1-3</id>
        <name>3</name>
        <sequence type="described" ref="VSP_058130 VSP_058133"/>
    </isoform>
</comment>
<comment type="tissue specificity">
    <text evidence="4 5">Predominantly expressed in the central nervous system, where it is found in neurons but not in myelinating cells. Lower abundance is observed in peripheral neurons, where it is detectable only at early postnatal ages (PubMed:22461884). Expressed in both oligodendrocytes and neurons (PubMed:26571211).</text>
</comment>
<comment type="induction">
    <text evidence="3">Down-regulated by beta-catenin.</text>
</comment>
<comment type="disruption phenotype">
    <text evidence="5">No visible phenotype. Lysates from total brain and optic nerve (a pure white matter tract) display a selective decrease of Ttc7a and Efr3a protein levels.</text>
</comment>
<comment type="similarity">
    <text evidence="6">Belongs to the Hyccin family.</text>
</comment>
<dbReference type="EMBL" id="AB030242">
    <property type="protein sequence ID" value="BAB39850.1"/>
    <property type="molecule type" value="mRNA"/>
</dbReference>
<dbReference type="EMBL" id="AK161265">
    <property type="protein sequence ID" value="BAE36278.1"/>
    <property type="molecule type" value="mRNA"/>
</dbReference>
<dbReference type="EMBL" id="AC115786">
    <property type="status" value="NOT_ANNOTATED_CDS"/>
    <property type="molecule type" value="Genomic_DNA"/>
</dbReference>
<dbReference type="EMBL" id="AC117663">
    <property type="status" value="NOT_ANNOTATED_CDS"/>
    <property type="molecule type" value="Genomic_DNA"/>
</dbReference>
<dbReference type="EMBL" id="BC056381">
    <property type="protein sequence ID" value="AAH56381.1"/>
    <property type="molecule type" value="mRNA"/>
</dbReference>
<dbReference type="EMBL" id="BC060692">
    <property type="protein sequence ID" value="AAH60692.1"/>
    <property type="molecule type" value="mRNA"/>
</dbReference>
<dbReference type="CCDS" id="CCDS19113.1">
    <molecule id="Q6P9N1-1"/>
</dbReference>
<dbReference type="CCDS" id="CCDS80221.1">
    <molecule id="Q6P9N1-2"/>
</dbReference>
<dbReference type="RefSeq" id="NP_001297400.1">
    <molecule id="Q6P9N1-2"/>
    <property type="nucleotide sequence ID" value="NM_001310471.2"/>
</dbReference>
<dbReference type="RefSeq" id="NP_001412667.1">
    <molecule id="Q6P9N1-3"/>
    <property type="nucleotide sequence ID" value="NM_001425738.1"/>
</dbReference>
<dbReference type="RefSeq" id="NP_001412668.1">
    <molecule id="Q6P9N1-2"/>
    <property type="nucleotide sequence ID" value="NM_001425739.1"/>
</dbReference>
<dbReference type="RefSeq" id="NP_001412669.1">
    <molecule id="Q6P9N1-3"/>
    <property type="nucleotide sequence ID" value="NM_001425740.1"/>
</dbReference>
<dbReference type="RefSeq" id="NP_444320.2">
    <molecule id="Q6P9N1-1"/>
    <property type="nucleotide sequence ID" value="NM_053090.4"/>
</dbReference>
<dbReference type="RefSeq" id="XP_006535885.1">
    <property type="nucleotide sequence ID" value="XM_006535822.2"/>
</dbReference>
<dbReference type="RefSeq" id="XP_011248100.1">
    <molecule id="Q6P9N1-1"/>
    <property type="nucleotide sequence ID" value="XM_011249798.4"/>
</dbReference>
<dbReference type="RefSeq" id="XP_017176677.1">
    <property type="nucleotide sequence ID" value="XM_017321188.1"/>
</dbReference>
<dbReference type="SMR" id="Q6P9N1"/>
<dbReference type="FunCoup" id="Q6P9N1">
    <property type="interactions" value="2855"/>
</dbReference>
<dbReference type="STRING" id="10090.ENSMUSP00000030849"/>
<dbReference type="GlyGen" id="Q6P9N1">
    <property type="glycosylation" value="4 sites, 1 O-linked glycan (3 sites)"/>
</dbReference>
<dbReference type="iPTMnet" id="Q6P9N1"/>
<dbReference type="PhosphoSitePlus" id="Q6P9N1"/>
<dbReference type="SwissPalm" id="Q6P9N1"/>
<dbReference type="jPOST" id="Q6P9N1"/>
<dbReference type="PaxDb" id="10090-ENSMUSP00000030849"/>
<dbReference type="PeptideAtlas" id="Q6P9N1"/>
<dbReference type="ProteomicsDB" id="273292">
    <molecule id="Q6P9N1-1"/>
</dbReference>
<dbReference type="ProteomicsDB" id="273293">
    <molecule id="Q6P9N1-2"/>
</dbReference>
<dbReference type="ProteomicsDB" id="273294">
    <molecule id="Q6P9N1-3"/>
</dbReference>
<dbReference type="Pumba" id="Q6P9N1"/>
<dbReference type="Antibodypedia" id="53361">
    <property type="antibodies" value="62 antibodies from 19 providers"/>
</dbReference>
<dbReference type="Ensembl" id="ENSMUST00000030849.13">
    <molecule id="Q6P9N1-1"/>
    <property type="protein sequence ID" value="ENSMUSP00000030849.7"/>
    <property type="gene ID" value="ENSMUSG00000028995.15"/>
</dbReference>
<dbReference type="Ensembl" id="ENSMUST00000101513.9">
    <molecule id="Q6P9N1-2"/>
    <property type="protein sequence ID" value="ENSMUSP00000099050.3"/>
    <property type="gene ID" value="ENSMUSG00000028995.15"/>
</dbReference>
<dbReference type="Ensembl" id="ENSMUST00000115109.2">
    <molecule id="Q6P9N1-3"/>
    <property type="protein sequence ID" value="ENSMUSP00000110761.2"/>
    <property type="gene ID" value="ENSMUSG00000028995.15"/>
</dbReference>
<dbReference type="GeneID" id="84652"/>
<dbReference type="KEGG" id="mmu:84652"/>
<dbReference type="UCSC" id="uc008wqu.1">
    <property type="organism name" value="mouse"/>
</dbReference>
<dbReference type="UCSC" id="uc008wqv.1">
    <molecule id="Q6P9N1-1"/>
    <property type="organism name" value="mouse"/>
</dbReference>
<dbReference type="AGR" id="MGI:2149839"/>
<dbReference type="CTD" id="84668"/>
<dbReference type="MGI" id="MGI:2149839">
    <property type="gene designation" value="Hycc1"/>
</dbReference>
<dbReference type="VEuPathDB" id="HostDB:ENSMUSG00000028995"/>
<dbReference type="eggNOG" id="KOG4688">
    <property type="taxonomic scope" value="Eukaryota"/>
</dbReference>
<dbReference type="GeneTree" id="ENSGT00390000011295"/>
<dbReference type="InParanoid" id="Q6P9N1"/>
<dbReference type="OMA" id="LPMKYQA"/>
<dbReference type="OrthoDB" id="18937at2759"/>
<dbReference type="PhylomeDB" id="Q6P9N1"/>
<dbReference type="TreeFam" id="TF317153"/>
<dbReference type="BioGRID-ORCS" id="84652">
    <property type="hits" value="2 hits in 78 CRISPR screens"/>
</dbReference>
<dbReference type="ChiTaRS" id="Fam126a">
    <property type="organism name" value="mouse"/>
</dbReference>
<dbReference type="PRO" id="PR:Q6P9N1"/>
<dbReference type="Proteomes" id="UP000000589">
    <property type="component" value="Chromosome 5"/>
</dbReference>
<dbReference type="RNAct" id="Q6P9N1">
    <property type="molecule type" value="protein"/>
</dbReference>
<dbReference type="Bgee" id="ENSMUSG00000028995">
    <property type="expression patterns" value="Expressed in fetal liver hematopoietic progenitor cell and 250 other cell types or tissues"/>
</dbReference>
<dbReference type="ExpressionAtlas" id="Q6P9N1">
    <property type="expression patterns" value="baseline and differential"/>
</dbReference>
<dbReference type="GO" id="GO:0005737">
    <property type="term" value="C:cytoplasm"/>
    <property type="evidence" value="ECO:0000266"/>
    <property type="project" value="MGI"/>
</dbReference>
<dbReference type="GO" id="GO:0005829">
    <property type="term" value="C:cytosol"/>
    <property type="evidence" value="ECO:0000250"/>
    <property type="project" value="UniProtKB"/>
</dbReference>
<dbReference type="GO" id="GO:0043005">
    <property type="term" value="C:neuron projection"/>
    <property type="evidence" value="ECO:0000314"/>
    <property type="project" value="MGI"/>
</dbReference>
<dbReference type="GO" id="GO:0005886">
    <property type="term" value="C:plasma membrane"/>
    <property type="evidence" value="ECO:0000250"/>
    <property type="project" value="UniProtKB"/>
</dbReference>
<dbReference type="GO" id="GO:0042552">
    <property type="term" value="P:myelination"/>
    <property type="evidence" value="ECO:0000315"/>
    <property type="project" value="UniProtKB"/>
</dbReference>
<dbReference type="GO" id="GO:0046854">
    <property type="term" value="P:phosphatidylinositol phosphate biosynthetic process"/>
    <property type="evidence" value="ECO:0000250"/>
    <property type="project" value="UniProtKB"/>
</dbReference>
<dbReference type="GO" id="GO:0072659">
    <property type="term" value="P:protein localization to plasma membrane"/>
    <property type="evidence" value="ECO:0000250"/>
    <property type="project" value="UniProtKB"/>
</dbReference>
<dbReference type="InterPro" id="IPR018619">
    <property type="entry name" value="Hyccin"/>
</dbReference>
<dbReference type="PANTHER" id="PTHR31220:SF4">
    <property type="entry name" value="HYCCIN"/>
    <property type="match status" value="1"/>
</dbReference>
<dbReference type="PANTHER" id="PTHR31220">
    <property type="entry name" value="HYCCIN RELATED"/>
    <property type="match status" value="1"/>
</dbReference>
<dbReference type="Pfam" id="PF09790">
    <property type="entry name" value="Hyccin"/>
    <property type="match status" value="1"/>
</dbReference>
<name>HYCCI_MOUSE</name>
<proteinExistence type="evidence at protein level"/>